<dbReference type="EMBL" id="CP001298">
    <property type="protein sequence ID" value="ACK83002.1"/>
    <property type="molecule type" value="Genomic_DNA"/>
</dbReference>
<dbReference type="RefSeq" id="WP_015950693.1">
    <property type="nucleotide sequence ID" value="NC_011757.1"/>
</dbReference>
<dbReference type="SMR" id="B7KXC8"/>
<dbReference type="KEGG" id="mch:Mchl_2155"/>
<dbReference type="HOGENOM" id="CLU_061120_0_0_5"/>
<dbReference type="UniPathway" id="UPA00539"/>
<dbReference type="Proteomes" id="UP000002385">
    <property type="component" value="Chromosome"/>
</dbReference>
<dbReference type="GO" id="GO:0018189">
    <property type="term" value="P:pyrroloquinoline quinone biosynthetic process"/>
    <property type="evidence" value="ECO:0007669"/>
    <property type="project" value="UniProtKB-UniRule"/>
</dbReference>
<dbReference type="CDD" id="cd16274">
    <property type="entry name" value="PQQB-like_MBL-fold"/>
    <property type="match status" value="1"/>
</dbReference>
<dbReference type="Gene3D" id="3.60.15.10">
    <property type="entry name" value="Ribonuclease Z/Hydroxyacylglutathione hydrolase-like"/>
    <property type="match status" value="1"/>
</dbReference>
<dbReference type="HAMAP" id="MF_00653">
    <property type="entry name" value="PQQ_syn_PqqB"/>
    <property type="match status" value="1"/>
</dbReference>
<dbReference type="InterPro" id="IPR001279">
    <property type="entry name" value="Metallo-B-lactamas"/>
</dbReference>
<dbReference type="InterPro" id="IPR011842">
    <property type="entry name" value="PQQ_synth_PqqB"/>
</dbReference>
<dbReference type="InterPro" id="IPR036866">
    <property type="entry name" value="RibonucZ/Hydroxyglut_hydro"/>
</dbReference>
<dbReference type="NCBIfam" id="TIGR02108">
    <property type="entry name" value="PQQ_syn_pqqB"/>
    <property type="match status" value="1"/>
</dbReference>
<dbReference type="PANTHER" id="PTHR42663:SF7">
    <property type="entry name" value="COENZYME PQQ SYNTHESIS PROTEIN B"/>
    <property type="match status" value="1"/>
</dbReference>
<dbReference type="PANTHER" id="PTHR42663">
    <property type="entry name" value="HYDROLASE C777.06C-RELATED-RELATED"/>
    <property type="match status" value="1"/>
</dbReference>
<dbReference type="Pfam" id="PF12706">
    <property type="entry name" value="Lactamase_B_2"/>
    <property type="match status" value="1"/>
</dbReference>
<dbReference type="SUPFAM" id="SSF56281">
    <property type="entry name" value="Metallo-hydrolase/oxidoreductase"/>
    <property type="match status" value="1"/>
</dbReference>
<reference key="1">
    <citation type="submission" date="2008-12" db="EMBL/GenBank/DDBJ databases">
        <title>Complete sequence of chromosome of Methylobacterium chloromethanicum CM4.</title>
        <authorList>
            <consortium name="US DOE Joint Genome Institute"/>
            <person name="Lucas S."/>
            <person name="Copeland A."/>
            <person name="Lapidus A."/>
            <person name="Glavina del Rio T."/>
            <person name="Dalin E."/>
            <person name="Tice H."/>
            <person name="Bruce D."/>
            <person name="Goodwin L."/>
            <person name="Pitluck S."/>
            <person name="Chertkov O."/>
            <person name="Brettin T."/>
            <person name="Detter J.C."/>
            <person name="Han C."/>
            <person name="Larimer F."/>
            <person name="Land M."/>
            <person name="Hauser L."/>
            <person name="Kyrpides N."/>
            <person name="Mikhailova N."/>
            <person name="Marx C."/>
            <person name="Richardson P."/>
        </authorList>
    </citation>
    <scope>NUCLEOTIDE SEQUENCE [LARGE SCALE GENOMIC DNA]</scope>
    <source>
        <strain>CM4 / NCIMB 13688</strain>
    </source>
</reference>
<organism>
    <name type="scientific">Methylorubrum extorquens (strain CM4 / NCIMB 13688)</name>
    <name type="common">Methylobacterium extorquens</name>
    <dbReference type="NCBI Taxonomy" id="440085"/>
    <lineage>
        <taxon>Bacteria</taxon>
        <taxon>Pseudomonadati</taxon>
        <taxon>Pseudomonadota</taxon>
        <taxon>Alphaproteobacteria</taxon>
        <taxon>Hyphomicrobiales</taxon>
        <taxon>Methylobacteriaceae</taxon>
        <taxon>Methylorubrum</taxon>
    </lineage>
</organism>
<evidence type="ECO:0000255" key="1">
    <source>
        <dbReference type="HAMAP-Rule" id="MF_00653"/>
    </source>
</evidence>
<keyword id="KW-0884">PQQ biosynthesis</keyword>
<keyword id="KW-0813">Transport</keyword>
<proteinExistence type="inferred from homology"/>
<comment type="function">
    <text evidence="1">May be involved in the transport of PQQ or its precursor to the periplasm.</text>
</comment>
<comment type="pathway">
    <text evidence="1">Cofactor biosynthesis; pyrroloquinoline quinone biosynthesis.</text>
</comment>
<comment type="similarity">
    <text evidence="1">Belongs to the PqqB family.</text>
</comment>
<name>PQQB_METC4</name>
<gene>
    <name evidence="1" type="primary">pqqB</name>
    <name type="ordered locus">Mchl_2155</name>
</gene>
<sequence>MHVVILGSAAGGGVPQWNCRCSICSLAWAGDSRVRPRTQSSIAVSPDGERWLLLNASPDIRQQIQANPQMHPREGLRHSPIHAVLLTNGDVDHVAGLLTLREGQPFSLYATPGILASVSDNRVFDVMAAEVVKRQTIALNETFEPVPGLSVTLFSVPGKVPLWLEDASMEIGAETETTVGTMIEAGGKRLAYIPGCAGVTEDLKARIAGADALLFDGTVLEDDDMIRAGVGTKTGWRMGHIQMNGETGSIASLADVEIGRRVFVHINNTNPVLIEDSSERASVEARGWTVAHDGLTLDL</sequence>
<accession>B7KXC8</accession>
<feature type="chain" id="PRO_1000147519" description="Coenzyme PQQ synthesis protein B">
    <location>
        <begin position="1"/>
        <end position="299"/>
    </location>
</feature>
<protein>
    <recommendedName>
        <fullName evidence="1">Coenzyme PQQ synthesis protein B</fullName>
    </recommendedName>
    <alternativeName>
        <fullName evidence="1">Pyrroloquinoline quinone biosynthesis protein B</fullName>
    </alternativeName>
</protein>